<evidence type="ECO:0000255" key="1">
    <source>
        <dbReference type="HAMAP-Rule" id="MF_01361"/>
    </source>
</evidence>
<name>Y3602_ACIAD</name>
<organism>
    <name type="scientific">Acinetobacter baylyi (strain ATCC 33305 / BD413 / ADP1)</name>
    <dbReference type="NCBI Taxonomy" id="62977"/>
    <lineage>
        <taxon>Bacteria</taxon>
        <taxon>Pseudomonadati</taxon>
        <taxon>Pseudomonadota</taxon>
        <taxon>Gammaproteobacteria</taxon>
        <taxon>Moraxellales</taxon>
        <taxon>Moraxellaceae</taxon>
        <taxon>Acinetobacter</taxon>
    </lineage>
</organism>
<accession>Q6F6S7</accession>
<comment type="subcellular location">
    <subcellularLocation>
        <location evidence="1">Cell membrane</location>
        <topology evidence="1">Multi-pass membrane protein</topology>
    </subcellularLocation>
</comment>
<comment type="similarity">
    <text evidence="1">Belongs to the UPF0391 family.</text>
</comment>
<proteinExistence type="inferred from homology"/>
<dbReference type="EMBL" id="CR543861">
    <property type="protein sequence ID" value="CAG70240.1"/>
    <property type="molecule type" value="Genomic_DNA"/>
</dbReference>
<dbReference type="STRING" id="202950.GCA_001485005_01617"/>
<dbReference type="KEGG" id="aci:ACIAD3602"/>
<dbReference type="eggNOG" id="COG5487">
    <property type="taxonomic scope" value="Bacteria"/>
</dbReference>
<dbReference type="HOGENOM" id="CLU_187346_2_0_6"/>
<dbReference type="OrthoDB" id="5906789at2"/>
<dbReference type="BioCyc" id="ASP62977:ACIAD_RS16895-MONOMER"/>
<dbReference type="Proteomes" id="UP000000430">
    <property type="component" value="Chromosome"/>
</dbReference>
<dbReference type="GO" id="GO:0005886">
    <property type="term" value="C:plasma membrane"/>
    <property type="evidence" value="ECO:0007669"/>
    <property type="project" value="UniProtKB-SubCell"/>
</dbReference>
<dbReference type="HAMAP" id="MF_01361">
    <property type="entry name" value="UPF0391"/>
    <property type="match status" value="1"/>
</dbReference>
<dbReference type="InterPro" id="IPR009760">
    <property type="entry name" value="DUF1328"/>
</dbReference>
<dbReference type="NCBIfam" id="NF010227">
    <property type="entry name" value="PRK13682.1-2"/>
    <property type="match status" value="1"/>
</dbReference>
<dbReference type="NCBIfam" id="NF010229">
    <property type="entry name" value="PRK13682.1-4"/>
    <property type="match status" value="1"/>
</dbReference>
<dbReference type="Pfam" id="PF07043">
    <property type="entry name" value="DUF1328"/>
    <property type="match status" value="1"/>
</dbReference>
<dbReference type="PIRSF" id="PIRSF036466">
    <property type="entry name" value="UCP036466"/>
    <property type="match status" value="1"/>
</dbReference>
<protein>
    <recommendedName>
        <fullName evidence="1">UPF0391 membrane protein ACIAD3602</fullName>
    </recommendedName>
</protein>
<feature type="chain" id="PRO_0000256708" description="UPF0391 membrane protein ACIAD3602">
    <location>
        <begin position="1"/>
        <end position="52"/>
    </location>
</feature>
<feature type="transmembrane region" description="Helical" evidence="1">
    <location>
        <begin position="6"/>
        <end position="26"/>
    </location>
</feature>
<feature type="transmembrane region" description="Helical" evidence="1">
    <location>
        <begin position="30"/>
        <end position="50"/>
    </location>
</feature>
<gene>
    <name type="ordered locus">ACIAD3602</name>
</gene>
<reference key="1">
    <citation type="journal article" date="2004" name="Nucleic Acids Res.">
        <title>Unique features revealed by the genome sequence of Acinetobacter sp. ADP1, a versatile and naturally transformation competent bacterium.</title>
        <authorList>
            <person name="Barbe V."/>
            <person name="Vallenet D."/>
            <person name="Fonknechten N."/>
            <person name="Kreimeyer A."/>
            <person name="Oztas S."/>
            <person name="Labarre L."/>
            <person name="Cruveiller S."/>
            <person name="Robert C."/>
            <person name="Duprat S."/>
            <person name="Wincker P."/>
            <person name="Ornston L.N."/>
            <person name="Weissenbach J."/>
            <person name="Marliere P."/>
            <person name="Cohen G.N."/>
            <person name="Medigue C."/>
        </authorList>
    </citation>
    <scope>NUCLEOTIDE SEQUENCE [LARGE SCALE GENOMIC DNA]</scope>
    <source>
        <strain>ATCC 33305 / BD413 / ADP1</strain>
    </source>
</reference>
<keyword id="KW-1003">Cell membrane</keyword>
<keyword id="KW-0472">Membrane</keyword>
<keyword id="KW-0812">Transmembrane</keyword>
<keyword id="KW-1133">Transmembrane helix</keyword>
<sequence length="52" mass="5446">MFRWAIIFAVIALIASLLGFGGVAGLSKDFAVILLVVAVILAIVGFISRGRV</sequence>